<proteinExistence type="inferred from homology"/>
<sequence length="281" mass="31047">MSLRRAKSLPSLKNIAEVAKPITKAPPLPLLAFEGPGLSTCRWYPTTVRTVHNTPSKAQTTLLSTAKKESAFSAMNLKALRNECRSRGLQVSGRKSDLIERIVDFELKGPLGRRGTRRAFHSPGTSSASVCRPVDKVTMPDIALTERAVQQPEKNYILRIPSLSREAASHPVTKSEKDLAQGADEDADPTSEEGRVLTPDSDLHIESPVVINKIEIINEDDYLQDDSRQSSDSQGGSQQDSDGTGQQNFSPRDRRFFAGLTAAVGLWWYFGNKSAKRRMRK</sequence>
<accession>Q75CC0</accession>
<keyword id="KW-0472">Membrane</keyword>
<keyword id="KW-0496">Mitochondrion</keyword>
<keyword id="KW-1185">Reference proteome</keyword>
<keyword id="KW-0809">Transit peptide</keyword>
<keyword id="KW-0812">Transmembrane</keyword>
<keyword id="KW-1133">Transmembrane helix</keyword>
<name>AIM34_EREGS</name>
<gene>
    <name type="primary">AIM34</name>
    <name type="ordered locus">ACL011C</name>
</gene>
<evidence type="ECO:0000250" key="1"/>
<evidence type="ECO:0000255" key="2"/>
<evidence type="ECO:0000255" key="3">
    <source>
        <dbReference type="PROSITE-ProRule" id="PRU00186"/>
    </source>
</evidence>
<evidence type="ECO:0000256" key="4">
    <source>
        <dbReference type="SAM" id="MobiDB-lite"/>
    </source>
</evidence>
<evidence type="ECO:0000305" key="5"/>
<feature type="transit peptide" description="Mitochondrion" evidence="2">
    <location>
        <begin position="1"/>
        <end status="unknown"/>
    </location>
</feature>
<feature type="chain" id="PRO_0000399708" description="Altered inheritance of mitochondria protein 34, mitochondrial">
    <location>
        <begin status="unknown"/>
        <end position="281"/>
    </location>
</feature>
<feature type="transmembrane region" description="Helical" evidence="2">
    <location>
        <begin position="255"/>
        <end position="272"/>
    </location>
</feature>
<feature type="domain" description="SAP" evidence="3">
    <location>
        <begin position="72"/>
        <end position="106"/>
    </location>
</feature>
<feature type="region of interest" description="Disordered" evidence="4">
    <location>
        <begin position="166"/>
        <end position="202"/>
    </location>
</feature>
<feature type="region of interest" description="Disordered" evidence="4">
    <location>
        <begin position="221"/>
        <end position="253"/>
    </location>
</feature>
<feature type="compositionally biased region" description="Low complexity" evidence="4">
    <location>
        <begin position="230"/>
        <end position="247"/>
    </location>
</feature>
<comment type="subcellular location">
    <subcellularLocation>
        <location evidence="1">Mitochondrion membrane</location>
        <topology evidence="1">Single-pass membrane protein</topology>
    </subcellularLocation>
</comment>
<comment type="similarity">
    <text evidence="5">Belongs to the AIM34 family.</text>
</comment>
<dbReference type="EMBL" id="AE016816">
    <property type="protein sequence ID" value="AAS51217.1"/>
    <property type="molecule type" value="Genomic_DNA"/>
</dbReference>
<dbReference type="RefSeq" id="NP_983393.1">
    <property type="nucleotide sequence ID" value="NM_208746.1"/>
</dbReference>
<dbReference type="SMR" id="Q75CC0"/>
<dbReference type="STRING" id="284811.Q75CC0"/>
<dbReference type="EnsemblFungi" id="AAS51217">
    <property type="protein sequence ID" value="AAS51217"/>
    <property type="gene ID" value="AGOS_ACL011C"/>
</dbReference>
<dbReference type="GeneID" id="4619518"/>
<dbReference type="KEGG" id="ago:AGOS_ACL011C"/>
<dbReference type="eggNOG" id="ENOG502S5IP">
    <property type="taxonomic scope" value="Eukaryota"/>
</dbReference>
<dbReference type="HOGENOM" id="CLU_1098634_0_0_1"/>
<dbReference type="InParanoid" id="Q75CC0"/>
<dbReference type="OMA" id="KNECRTR"/>
<dbReference type="OrthoDB" id="3993201at2759"/>
<dbReference type="Proteomes" id="UP000000591">
    <property type="component" value="Chromosome III"/>
</dbReference>
<dbReference type="GO" id="GO:0031966">
    <property type="term" value="C:mitochondrial membrane"/>
    <property type="evidence" value="ECO:0007669"/>
    <property type="project" value="UniProtKB-SubCell"/>
</dbReference>
<dbReference type="Gene3D" id="1.10.720.30">
    <property type="entry name" value="SAP domain"/>
    <property type="match status" value="1"/>
</dbReference>
<dbReference type="InterPro" id="IPR003034">
    <property type="entry name" value="SAP_dom"/>
</dbReference>
<dbReference type="InterPro" id="IPR036361">
    <property type="entry name" value="SAP_dom_sf"/>
</dbReference>
<dbReference type="Pfam" id="PF02037">
    <property type="entry name" value="SAP"/>
    <property type="match status" value="1"/>
</dbReference>
<dbReference type="SMART" id="SM00513">
    <property type="entry name" value="SAP"/>
    <property type="match status" value="1"/>
</dbReference>
<dbReference type="SUPFAM" id="SSF68906">
    <property type="entry name" value="SAP domain"/>
    <property type="match status" value="1"/>
</dbReference>
<dbReference type="PROSITE" id="PS50800">
    <property type="entry name" value="SAP"/>
    <property type="match status" value="1"/>
</dbReference>
<reference key="1">
    <citation type="journal article" date="2004" name="Science">
        <title>The Ashbya gossypii genome as a tool for mapping the ancient Saccharomyces cerevisiae genome.</title>
        <authorList>
            <person name="Dietrich F.S."/>
            <person name="Voegeli S."/>
            <person name="Brachat S."/>
            <person name="Lerch A."/>
            <person name="Gates K."/>
            <person name="Steiner S."/>
            <person name="Mohr C."/>
            <person name="Poehlmann R."/>
            <person name="Luedi P."/>
            <person name="Choi S."/>
            <person name="Wing R.A."/>
            <person name="Flavier A."/>
            <person name="Gaffney T.D."/>
            <person name="Philippsen P."/>
        </authorList>
    </citation>
    <scope>NUCLEOTIDE SEQUENCE [LARGE SCALE GENOMIC DNA]</scope>
    <source>
        <strain>ATCC 10895 / CBS 109.51 / FGSC 9923 / NRRL Y-1056</strain>
    </source>
</reference>
<reference key="2">
    <citation type="journal article" date="2013" name="G3 (Bethesda)">
        <title>Genomes of Ashbya fungi isolated from insects reveal four mating-type loci, numerous translocations, lack of transposons, and distinct gene duplications.</title>
        <authorList>
            <person name="Dietrich F.S."/>
            <person name="Voegeli S."/>
            <person name="Kuo S."/>
            <person name="Philippsen P."/>
        </authorList>
    </citation>
    <scope>GENOME REANNOTATION</scope>
    <source>
        <strain>ATCC 10895 / CBS 109.51 / FGSC 9923 / NRRL Y-1056</strain>
    </source>
</reference>
<protein>
    <recommendedName>
        <fullName>Altered inheritance of mitochondria protein 34, mitochondrial</fullName>
    </recommendedName>
</protein>
<organism>
    <name type="scientific">Eremothecium gossypii (strain ATCC 10895 / CBS 109.51 / FGSC 9923 / NRRL Y-1056)</name>
    <name type="common">Yeast</name>
    <name type="synonym">Ashbya gossypii</name>
    <dbReference type="NCBI Taxonomy" id="284811"/>
    <lineage>
        <taxon>Eukaryota</taxon>
        <taxon>Fungi</taxon>
        <taxon>Dikarya</taxon>
        <taxon>Ascomycota</taxon>
        <taxon>Saccharomycotina</taxon>
        <taxon>Saccharomycetes</taxon>
        <taxon>Saccharomycetales</taxon>
        <taxon>Saccharomycetaceae</taxon>
        <taxon>Eremothecium</taxon>
    </lineage>
</organism>